<comment type="function">
    <text evidence="2">With S4 and S5 plays an important role in translational accuracy.</text>
</comment>
<comment type="function">
    <text evidence="2">Interacts with and stabilizes bases of the 16S rRNA that are involved in tRNA selection in the A site and with the mRNA backbone. Located at the interface of the 30S and 50S subunits, it traverses the body of the 30S subunit contacting proteins on the other side and probably holding the rRNA structure together. The combined cluster of proteins S8, S12 and S17 appears to hold together the shoulder and platform of the 30S subunit.</text>
</comment>
<comment type="subunit">
    <text evidence="2">Part of the 30S ribosomal subunit. Contacts proteins S8 and S17. May interact with IF1 in the 30S initiation complex.</text>
</comment>
<comment type="similarity">
    <text evidence="2">Belongs to the universal ribosomal protein uS12 family.</text>
</comment>
<proteinExistence type="inferred from homology"/>
<name>RS12_GEODF</name>
<sequence>MPTINQLIRIGRESKKDKSTAPALKCCPQKRGVCTRVYTTTPKKPNSALRKVARVRLTNGIEVTSYIPGVGHNLQEHSVVLIRGGRVKDLPGVRYHIVRGTLDSVGVKDRKKSRSKYGAKRPK</sequence>
<evidence type="ECO:0000250" key="1"/>
<evidence type="ECO:0000255" key="2">
    <source>
        <dbReference type="HAMAP-Rule" id="MF_00403"/>
    </source>
</evidence>
<evidence type="ECO:0000256" key="3">
    <source>
        <dbReference type="SAM" id="MobiDB-lite"/>
    </source>
</evidence>
<evidence type="ECO:0000305" key="4"/>
<accession>B9M6V0</accession>
<feature type="chain" id="PRO_1000134636" description="Small ribosomal subunit protein uS12">
    <location>
        <begin position="1"/>
        <end position="123"/>
    </location>
</feature>
<feature type="region of interest" description="Disordered" evidence="3">
    <location>
        <begin position="104"/>
        <end position="123"/>
    </location>
</feature>
<feature type="compositionally biased region" description="Basic residues" evidence="3">
    <location>
        <begin position="109"/>
        <end position="123"/>
    </location>
</feature>
<feature type="modified residue" description="3-methylthioaspartic acid" evidence="1">
    <location>
        <position position="89"/>
    </location>
</feature>
<reference key="1">
    <citation type="submission" date="2009-01" db="EMBL/GenBank/DDBJ databases">
        <title>Complete sequence of Geobacter sp. FRC-32.</title>
        <authorList>
            <consortium name="US DOE Joint Genome Institute"/>
            <person name="Lucas S."/>
            <person name="Copeland A."/>
            <person name="Lapidus A."/>
            <person name="Glavina del Rio T."/>
            <person name="Dalin E."/>
            <person name="Tice H."/>
            <person name="Bruce D."/>
            <person name="Goodwin L."/>
            <person name="Pitluck S."/>
            <person name="Saunders E."/>
            <person name="Brettin T."/>
            <person name="Detter J.C."/>
            <person name="Han C."/>
            <person name="Larimer F."/>
            <person name="Land M."/>
            <person name="Hauser L."/>
            <person name="Kyrpides N."/>
            <person name="Ovchinnikova G."/>
            <person name="Kostka J."/>
            <person name="Richardson P."/>
        </authorList>
    </citation>
    <scope>NUCLEOTIDE SEQUENCE [LARGE SCALE GENOMIC DNA]</scope>
    <source>
        <strain>DSM 22248 / JCM 15807 / FRC-32</strain>
    </source>
</reference>
<protein>
    <recommendedName>
        <fullName evidence="2">Small ribosomal subunit protein uS12</fullName>
    </recommendedName>
    <alternativeName>
        <fullName evidence="4">30S ribosomal protein S12</fullName>
    </alternativeName>
</protein>
<organism>
    <name type="scientific">Geotalea daltonii (strain DSM 22248 / JCM 15807 / FRC-32)</name>
    <name type="common">Geobacter daltonii</name>
    <dbReference type="NCBI Taxonomy" id="316067"/>
    <lineage>
        <taxon>Bacteria</taxon>
        <taxon>Pseudomonadati</taxon>
        <taxon>Thermodesulfobacteriota</taxon>
        <taxon>Desulfuromonadia</taxon>
        <taxon>Geobacterales</taxon>
        <taxon>Geobacteraceae</taxon>
        <taxon>Geotalea</taxon>
    </lineage>
</organism>
<dbReference type="EMBL" id="CP001390">
    <property type="protein sequence ID" value="ACM21971.1"/>
    <property type="molecule type" value="Genomic_DNA"/>
</dbReference>
<dbReference type="RefSeq" id="WP_012648698.1">
    <property type="nucleotide sequence ID" value="NC_011979.1"/>
</dbReference>
<dbReference type="SMR" id="B9M6V0"/>
<dbReference type="STRING" id="316067.Geob_3630"/>
<dbReference type="KEGG" id="geo:Geob_3630"/>
<dbReference type="eggNOG" id="COG0048">
    <property type="taxonomic scope" value="Bacteria"/>
</dbReference>
<dbReference type="HOGENOM" id="CLU_104295_1_2_7"/>
<dbReference type="OrthoDB" id="9802366at2"/>
<dbReference type="Proteomes" id="UP000007721">
    <property type="component" value="Chromosome"/>
</dbReference>
<dbReference type="GO" id="GO:0015935">
    <property type="term" value="C:small ribosomal subunit"/>
    <property type="evidence" value="ECO:0007669"/>
    <property type="project" value="InterPro"/>
</dbReference>
<dbReference type="GO" id="GO:0019843">
    <property type="term" value="F:rRNA binding"/>
    <property type="evidence" value="ECO:0007669"/>
    <property type="project" value="UniProtKB-UniRule"/>
</dbReference>
<dbReference type="GO" id="GO:0003735">
    <property type="term" value="F:structural constituent of ribosome"/>
    <property type="evidence" value="ECO:0007669"/>
    <property type="project" value="InterPro"/>
</dbReference>
<dbReference type="GO" id="GO:0000049">
    <property type="term" value="F:tRNA binding"/>
    <property type="evidence" value="ECO:0007669"/>
    <property type="project" value="UniProtKB-UniRule"/>
</dbReference>
<dbReference type="GO" id="GO:0006412">
    <property type="term" value="P:translation"/>
    <property type="evidence" value="ECO:0007669"/>
    <property type="project" value="UniProtKB-UniRule"/>
</dbReference>
<dbReference type="CDD" id="cd03368">
    <property type="entry name" value="Ribosomal_S12"/>
    <property type="match status" value="1"/>
</dbReference>
<dbReference type="FunFam" id="2.40.50.140:FF:000001">
    <property type="entry name" value="30S ribosomal protein S12"/>
    <property type="match status" value="1"/>
</dbReference>
<dbReference type="Gene3D" id="2.40.50.140">
    <property type="entry name" value="Nucleic acid-binding proteins"/>
    <property type="match status" value="1"/>
</dbReference>
<dbReference type="HAMAP" id="MF_00403_B">
    <property type="entry name" value="Ribosomal_uS12_B"/>
    <property type="match status" value="1"/>
</dbReference>
<dbReference type="InterPro" id="IPR012340">
    <property type="entry name" value="NA-bd_OB-fold"/>
</dbReference>
<dbReference type="InterPro" id="IPR006032">
    <property type="entry name" value="Ribosomal_uS12"/>
</dbReference>
<dbReference type="InterPro" id="IPR005679">
    <property type="entry name" value="Ribosomal_uS12_bac"/>
</dbReference>
<dbReference type="NCBIfam" id="TIGR00981">
    <property type="entry name" value="rpsL_bact"/>
    <property type="match status" value="1"/>
</dbReference>
<dbReference type="PANTHER" id="PTHR11652">
    <property type="entry name" value="30S RIBOSOMAL PROTEIN S12 FAMILY MEMBER"/>
    <property type="match status" value="1"/>
</dbReference>
<dbReference type="Pfam" id="PF00164">
    <property type="entry name" value="Ribosom_S12_S23"/>
    <property type="match status" value="1"/>
</dbReference>
<dbReference type="PIRSF" id="PIRSF002133">
    <property type="entry name" value="Ribosomal_S12/S23"/>
    <property type="match status" value="1"/>
</dbReference>
<dbReference type="PRINTS" id="PR01034">
    <property type="entry name" value="RIBOSOMALS12"/>
</dbReference>
<dbReference type="SUPFAM" id="SSF50249">
    <property type="entry name" value="Nucleic acid-binding proteins"/>
    <property type="match status" value="1"/>
</dbReference>
<dbReference type="PROSITE" id="PS00055">
    <property type="entry name" value="RIBOSOMAL_S12"/>
    <property type="match status" value="1"/>
</dbReference>
<gene>
    <name evidence="2" type="primary">rpsL</name>
    <name type="ordered locus">Geob_3630</name>
</gene>
<keyword id="KW-0488">Methylation</keyword>
<keyword id="KW-1185">Reference proteome</keyword>
<keyword id="KW-0687">Ribonucleoprotein</keyword>
<keyword id="KW-0689">Ribosomal protein</keyword>
<keyword id="KW-0694">RNA-binding</keyword>
<keyword id="KW-0699">rRNA-binding</keyword>
<keyword id="KW-0820">tRNA-binding</keyword>